<dbReference type="EC" id="7.-.-.-" evidence="2 4"/>
<dbReference type="EMBL" id="CP000627">
    <property type="protein sequence ID" value="ABQ21374.1"/>
    <property type="molecule type" value="Genomic_DNA"/>
</dbReference>
<dbReference type="EMBL" id="CP001235">
    <property type="protein sequence ID" value="ACP09043.1"/>
    <property type="molecule type" value="Genomic_DNA"/>
</dbReference>
<dbReference type="KEGG" id="vco:VC0395_A0537"/>
<dbReference type="KEGG" id="vcr:VC395_1031"/>
<dbReference type="PATRIC" id="fig|345073.21.peg.1001"/>
<dbReference type="eggNOG" id="COG2878">
    <property type="taxonomic scope" value="Bacteria"/>
</dbReference>
<dbReference type="HOGENOM" id="CLU_063448_2_0_6"/>
<dbReference type="OrthoDB" id="9789936at2"/>
<dbReference type="Proteomes" id="UP000000249">
    <property type="component" value="Chromosome 2"/>
</dbReference>
<dbReference type="GO" id="GO:0005886">
    <property type="term" value="C:plasma membrane"/>
    <property type="evidence" value="ECO:0007669"/>
    <property type="project" value="UniProtKB-SubCell"/>
</dbReference>
<dbReference type="GO" id="GO:0051539">
    <property type="term" value="F:4 iron, 4 sulfur cluster binding"/>
    <property type="evidence" value="ECO:0007669"/>
    <property type="project" value="UniProtKB-UniRule"/>
</dbReference>
<dbReference type="GO" id="GO:0009055">
    <property type="term" value="F:electron transfer activity"/>
    <property type="evidence" value="ECO:0007669"/>
    <property type="project" value="InterPro"/>
</dbReference>
<dbReference type="GO" id="GO:0046872">
    <property type="term" value="F:metal ion binding"/>
    <property type="evidence" value="ECO:0007669"/>
    <property type="project" value="UniProtKB-KW"/>
</dbReference>
<dbReference type="GO" id="GO:0022900">
    <property type="term" value="P:electron transport chain"/>
    <property type="evidence" value="ECO:0007669"/>
    <property type="project" value="UniProtKB-UniRule"/>
</dbReference>
<dbReference type="FunFam" id="1.10.15.40:FF:000001">
    <property type="entry name" value="Ion-translocating oxidoreductase complex subunit B"/>
    <property type="match status" value="1"/>
</dbReference>
<dbReference type="Gene3D" id="3.30.70.20">
    <property type="match status" value="2"/>
</dbReference>
<dbReference type="Gene3D" id="1.10.15.40">
    <property type="entry name" value="Electron transport complex subunit B, putative Fe-S cluster"/>
    <property type="match status" value="1"/>
</dbReference>
<dbReference type="HAMAP" id="MF_00463">
    <property type="entry name" value="RsxB_RnfB"/>
    <property type="match status" value="1"/>
</dbReference>
<dbReference type="InterPro" id="IPR007202">
    <property type="entry name" value="4Fe-4S_dom"/>
</dbReference>
<dbReference type="InterPro" id="IPR017896">
    <property type="entry name" value="4Fe4S_Fe-S-bd"/>
</dbReference>
<dbReference type="InterPro" id="IPR017900">
    <property type="entry name" value="4Fe4S_Fe_S_CS"/>
</dbReference>
<dbReference type="InterPro" id="IPR010207">
    <property type="entry name" value="Elect_transpt_cplx_RnfB/RsxB"/>
</dbReference>
<dbReference type="InterPro" id="IPR016463">
    <property type="entry name" value="RnfB/RsxB_Proteobac"/>
</dbReference>
<dbReference type="InterPro" id="IPR050294">
    <property type="entry name" value="RnfB_subfamily"/>
</dbReference>
<dbReference type="NCBIfam" id="NF003475">
    <property type="entry name" value="PRK05113.1"/>
    <property type="match status" value="1"/>
</dbReference>
<dbReference type="NCBIfam" id="TIGR01944">
    <property type="entry name" value="rnfB"/>
    <property type="match status" value="1"/>
</dbReference>
<dbReference type="PANTHER" id="PTHR42859:SF3">
    <property type="entry name" value="ION-TRANSLOCATING OXIDOREDUCTASE COMPLEX SUBUNIT B"/>
    <property type="match status" value="1"/>
</dbReference>
<dbReference type="PANTHER" id="PTHR42859">
    <property type="entry name" value="OXIDOREDUCTASE"/>
    <property type="match status" value="1"/>
</dbReference>
<dbReference type="Pfam" id="PF14697">
    <property type="entry name" value="Fer4_21"/>
    <property type="match status" value="1"/>
</dbReference>
<dbReference type="Pfam" id="PF04060">
    <property type="entry name" value="FeS"/>
    <property type="match status" value="1"/>
</dbReference>
<dbReference type="PIRSF" id="PIRSF005784">
    <property type="entry name" value="Elect_transpt_RnfB"/>
    <property type="match status" value="1"/>
</dbReference>
<dbReference type="SUPFAM" id="SSF54862">
    <property type="entry name" value="4Fe-4S ferredoxins"/>
    <property type="match status" value="1"/>
</dbReference>
<dbReference type="PROSITE" id="PS51656">
    <property type="entry name" value="4FE4S"/>
    <property type="match status" value="1"/>
</dbReference>
<dbReference type="PROSITE" id="PS00198">
    <property type="entry name" value="4FE4S_FER_1"/>
    <property type="match status" value="2"/>
</dbReference>
<dbReference type="PROSITE" id="PS51379">
    <property type="entry name" value="4FE4S_FER_2"/>
    <property type="match status" value="2"/>
</dbReference>
<accession>A5F2R3</accession>
<accession>C3LZ27</accession>
<feature type="chain" id="PRO_1000072387" description="Ion-translocating oxidoreductase complex subunit B">
    <location>
        <begin position="1"/>
        <end position="195"/>
    </location>
</feature>
<feature type="topological domain" description="Periplasmic" evidence="5">
    <location>
        <begin position="1"/>
        <end position="3"/>
    </location>
</feature>
<feature type="transmembrane region" description="Helical" evidence="1">
    <location>
        <begin position="4"/>
        <end position="24"/>
    </location>
</feature>
<feature type="topological domain" description="Cytoplasmic" evidence="3">
    <location>
        <begin position="25"/>
        <end position="195"/>
    </location>
</feature>
<feature type="domain" description="4Fe-4S" evidence="2">
    <location>
        <begin position="32"/>
        <end position="90"/>
    </location>
</feature>
<feature type="domain" description="4Fe-4S ferredoxin-type 1" evidence="2">
    <location>
        <begin position="105"/>
        <end position="134"/>
    </location>
</feature>
<feature type="domain" description="4Fe-4S ferredoxin-type 2" evidence="2">
    <location>
        <begin position="135"/>
        <end position="164"/>
    </location>
</feature>
<feature type="binding site" evidence="2">
    <location>
        <position position="49"/>
    </location>
    <ligand>
        <name>[4Fe-4S] cluster</name>
        <dbReference type="ChEBI" id="CHEBI:49883"/>
        <label>1</label>
    </ligand>
</feature>
<feature type="binding site" evidence="2">
    <location>
        <position position="52"/>
    </location>
    <ligand>
        <name>[4Fe-4S] cluster</name>
        <dbReference type="ChEBI" id="CHEBI:49883"/>
        <label>1</label>
    </ligand>
</feature>
<feature type="binding site" evidence="2">
    <location>
        <position position="57"/>
    </location>
    <ligand>
        <name>[4Fe-4S] cluster</name>
        <dbReference type="ChEBI" id="CHEBI:49883"/>
        <label>1</label>
    </ligand>
</feature>
<feature type="binding site" evidence="2">
    <location>
        <position position="73"/>
    </location>
    <ligand>
        <name>[4Fe-4S] cluster</name>
        <dbReference type="ChEBI" id="CHEBI:49883"/>
        <label>1</label>
    </ligand>
</feature>
<feature type="binding site" evidence="2">
    <location>
        <position position="114"/>
    </location>
    <ligand>
        <name>[4Fe-4S] cluster</name>
        <dbReference type="ChEBI" id="CHEBI:49883"/>
        <label>2</label>
    </ligand>
</feature>
<feature type="binding site" evidence="2">
    <location>
        <position position="117"/>
    </location>
    <ligand>
        <name>[4Fe-4S] cluster</name>
        <dbReference type="ChEBI" id="CHEBI:49883"/>
        <label>2</label>
    </ligand>
</feature>
<feature type="binding site" evidence="2">
    <location>
        <position position="120"/>
    </location>
    <ligand>
        <name>[4Fe-4S] cluster</name>
        <dbReference type="ChEBI" id="CHEBI:49883"/>
        <label>2</label>
    </ligand>
</feature>
<feature type="binding site" evidence="2">
    <location>
        <position position="124"/>
    </location>
    <ligand>
        <name>[4Fe-4S] cluster</name>
        <dbReference type="ChEBI" id="CHEBI:49883"/>
        <label>3</label>
    </ligand>
</feature>
<feature type="binding site" evidence="2">
    <location>
        <position position="144"/>
    </location>
    <ligand>
        <name>[4Fe-4S] cluster</name>
        <dbReference type="ChEBI" id="CHEBI:49883"/>
        <label>3</label>
    </ligand>
</feature>
<feature type="binding site" evidence="2">
    <location>
        <position position="147"/>
    </location>
    <ligand>
        <name>[4Fe-4S] cluster</name>
        <dbReference type="ChEBI" id="CHEBI:49883"/>
        <label>3</label>
    </ligand>
</feature>
<feature type="binding site" evidence="2">
    <location>
        <position position="150"/>
    </location>
    <ligand>
        <name>[4Fe-4S] cluster</name>
        <dbReference type="ChEBI" id="CHEBI:49883"/>
        <label>3</label>
    </ligand>
</feature>
<feature type="binding site" evidence="2">
    <location>
        <position position="154"/>
    </location>
    <ligand>
        <name>[4Fe-4S] cluster</name>
        <dbReference type="ChEBI" id="CHEBI:49883"/>
        <label>2</label>
    </ligand>
</feature>
<organism>
    <name type="scientific">Vibrio cholerae serotype O1 (strain ATCC 39541 / Classical Ogawa 395 / O395)</name>
    <dbReference type="NCBI Taxonomy" id="345073"/>
    <lineage>
        <taxon>Bacteria</taxon>
        <taxon>Pseudomonadati</taxon>
        <taxon>Pseudomonadota</taxon>
        <taxon>Gammaproteobacteria</taxon>
        <taxon>Vibrionales</taxon>
        <taxon>Vibrionaceae</taxon>
        <taxon>Vibrio</taxon>
    </lineage>
</organism>
<comment type="function">
    <text evidence="2">Part of a membrane-bound complex that couples electron transfer with translocation of ions across the membrane.</text>
</comment>
<comment type="cofactor">
    <cofactor evidence="2">
        <name>[4Fe-4S] cluster</name>
        <dbReference type="ChEBI" id="CHEBI:49883"/>
    </cofactor>
    <text evidence="2">Binds 3 [4Fe-4S] clusters.</text>
</comment>
<comment type="subunit">
    <text evidence="2">The complex is composed of six subunits: RnfA, RnfB, RnfC, RnfD, RnfE and RnfG.</text>
</comment>
<comment type="subcellular location">
    <subcellularLocation>
        <location evidence="3">Cell inner membrane</location>
        <topology evidence="3">Single-pass membrane protein</topology>
    </subcellularLocation>
</comment>
<comment type="similarity">
    <text evidence="2">Belongs to the 4Fe4S bacterial-type ferredoxin family. RnfB subfamily.</text>
</comment>
<proteinExistence type="evidence at protein level"/>
<gene>
    <name evidence="2" type="primary">rnfB</name>
    <name type="ordered locus">VC0395_A0537</name>
    <name type="ordered locus">VC395_1031</name>
</gene>
<reference key="1">
    <citation type="submission" date="2007-03" db="EMBL/GenBank/DDBJ databases">
        <authorList>
            <person name="Heidelberg J."/>
        </authorList>
    </citation>
    <scope>NUCLEOTIDE SEQUENCE [LARGE SCALE GENOMIC DNA]</scope>
    <source>
        <strain>ATCC 39541 / Classical Ogawa 395 / O395</strain>
    </source>
</reference>
<reference key="2">
    <citation type="journal article" date="2008" name="PLoS ONE">
        <title>A recalibrated molecular clock and independent origins for the cholera pandemic clones.</title>
        <authorList>
            <person name="Feng L."/>
            <person name="Reeves P.R."/>
            <person name="Lan R."/>
            <person name="Ren Y."/>
            <person name="Gao C."/>
            <person name="Zhou Z."/>
            <person name="Ren Y."/>
            <person name="Cheng J."/>
            <person name="Wang W."/>
            <person name="Wang J."/>
            <person name="Qian W."/>
            <person name="Li D."/>
            <person name="Wang L."/>
        </authorList>
    </citation>
    <scope>NUCLEOTIDE SEQUENCE [LARGE SCALE GENOMIC DNA]</scope>
    <source>
        <strain>ATCC 39541 / Classical Ogawa 395 / O395</strain>
    </source>
</reference>
<reference key="3">
    <citation type="journal article" date="2015" name="Biochemistry">
        <title>Complete topology of the RNF complex from Vibrio cholerae.</title>
        <authorList>
            <person name="Hreha T.N."/>
            <person name="Mezic K.G."/>
            <person name="Herce H.D."/>
            <person name="Duffy E.B."/>
            <person name="Bourges A."/>
            <person name="Pryshchep S."/>
            <person name="Juarez O."/>
            <person name="Barquera B."/>
        </authorList>
    </citation>
    <scope>SUBCELLULAR LOCATION</scope>
    <scope>TOPOLOGY</scope>
    <source>
        <strain>ATCC 39541 / Classical Ogawa 395 / O395</strain>
    </source>
</reference>
<evidence type="ECO:0000255" key="1"/>
<evidence type="ECO:0000255" key="2">
    <source>
        <dbReference type="HAMAP-Rule" id="MF_00463"/>
    </source>
</evidence>
<evidence type="ECO:0000269" key="3">
    <source>
    </source>
</evidence>
<evidence type="ECO:0000305" key="4"/>
<evidence type="ECO:0000305" key="5">
    <source>
    </source>
</evidence>
<keyword id="KW-0004">4Fe-4S</keyword>
<keyword id="KW-0997">Cell inner membrane</keyword>
<keyword id="KW-1003">Cell membrane</keyword>
<keyword id="KW-0249">Electron transport</keyword>
<keyword id="KW-0408">Iron</keyword>
<keyword id="KW-0411">Iron-sulfur</keyword>
<keyword id="KW-0472">Membrane</keyword>
<keyword id="KW-0479">Metal-binding</keyword>
<keyword id="KW-0677">Repeat</keyword>
<keyword id="KW-1278">Translocase</keyword>
<keyword id="KW-0812">Transmembrane</keyword>
<keyword id="KW-1133">Transmembrane helix</keyword>
<keyword id="KW-0813">Transport</keyword>
<protein>
    <recommendedName>
        <fullName evidence="2 4">Ion-translocating oxidoreductase complex subunit B</fullName>
        <ecNumber evidence="2 4">7.-.-.-</ecNumber>
    </recommendedName>
    <alternativeName>
        <fullName evidence="2 4">Rnf electron transport complex subunit B</fullName>
    </alternativeName>
</protein>
<name>RNFB_VIBC3</name>
<sequence>MSTIVIAVIALAALAAVFGAILGFASIRFKVEADPIVDQIDAILPQTQCGQCGYPGCRPYAEAIANGDAINKCPPGGQATIEKLADLMGVEVQDSAHDLDNKVKMVAFIHEDMCIGCTKCIQACPVDAIVGGNKAVHTVIKNECTGCDLCVAPCPTDCIEMIPVQTTPESWKWQLNAIPVVNVTDSAPAAQKSAN</sequence>